<proteinExistence type="inferred from homology"/>
<name>LPXB_MANSM</name>
<dbReference type="EC" id="2.4.1.182" evidence="1"/>
<dbReference type="EMBL" id="AE016827">
    <property type="protein sequence ID" value="AAU37029.1"/>
    <property type="molecule type" value="Genomic_DNA"/>
</dbReference>
<dbReference type="SMR" id="Q65VI1"/>
<dbReference type="STRING" id="221988.MS0422"/>
<dbReference type="CAZy" id="GT19">
    <property type="family name" value="Glycosyltransferase Family 19"/>
</dbReference>
<dbReference type="KEGG" id="msu:MS0422"/>
<dbReference type="eggNOG" id="COG0763">
    <property type="taxonomic scope" value="Bacteria"/>
</dbReference>
<dbReference type="HOGENOM" id="CLU_036577_3_0_6"/>
<dbReference type="UniPathway" id="UPA00973"/>
<dbReference type="Proteomes" id="UP000000607">
    <property type="component" value="Chromosome"/>
</dbReference>
<dbReference type="GO" id="GO:0016020">
    <property type="term" value="C:membrane"/>
    <property type="evidence" value="ECO:0007669"/>
    <property type="project" value="GOC"/>
</dbReference>
<dbReference type="GO" id="GO:0008915">
    <property type="term" value="F:lipid-A-disaccharide synthase activity"/>
    <property type="evidence" value="ECO:0007669"/>
    <property type="project" value="UniProtKB-UniRule"/>
</dbReference>
<dbReference type="GO" id="GO:0005543">
    <property type="term" value="F:phospholipid binding"/>
    <property type="evidence" value="ECO:0007669"/>
    <property type="project" value="TreeGrafter"/>
</dbReference>
<dbReference type="GO" id="GO:0009245">
    <property type="term" value="P:lipid A biosynthetic process"/>
    <property type="evidence" value="ECO:0007669"/>
    <property type="project" value="UniProtKB-UniRule"/>
</dbReference>
<dbReference type="HAMAP" id="MF_00392">
    <property type="entry name" value="LpxB"/>
    <property type="match status" value="1"/>
</dbReference>
<dbReference type="InterPro" id="IPR003835">
    <property type="entry name" value="Glyco_trans_19"/>
</dbReference>
<dbReference type="NCBIfam" id="TIGR00215">
    <property type="entry name" value="lpxB"/>
    <property type="match status" value="1"/>
</dbReference>
<dbReference type="PANTHER" id="PTHR30372">
    <property type="entry name" value="LIPID-A-DISACCHARIDE SYNTHASE"/>
    <property type="match status" value="1"/>
</dbReference>
<dbReference type="PANTHER" id="PTHR30372:SF4">
    <property type="entry name" value="LIPID-A-DISACCHARIDE SYNTHASE, MITOCHONDRIAL-RELATED"/>
    <property type="match status" value="1"/>
</dbReference>
<dbReference type="Pfam" id="PF02684">
    <property type="entry name" value="LpxB"/>
    <property type="match status" value="1"/>
</dbReference>
<dbReference type="SUPFAM" id="SSF53756">
    <property type="entry name" value="UDP-Glycosyltransferase/glycogen phosphorylase"/>
    <property type="match status" value="1"/>
</dbReference>
<feature type="chain" id="PRO_0000255197" description="Lipid-A-disaccharide synthase">
    <location>
        <begin position="1"/>
        <end position="397"/>
    </location>
</feature>
<keyword id="KW-0328">Glycosyltransferase</keyword>
<keyword id="KW-0441">Lipid A biosynthesis</keyword>
<keyword id="KW-0444">Lipid biosynthesis</keyword>
<keyword id="KW-0443">Lipid metabolism</keyword>
<keyword id="KW-0808">Transferase</keyword>
<protein>
    <recommendedName>
        <fullName evidence="1">Lipid-A-disaccharide synthase</fullName>
        <ecNumber evidence="1">2.4.1.182</ecNumber>
    </recommendedName>
</protein>
<gene>
    <name evidence="1" type="primary">lpxB</name>
    <name type="ordered locus">MS0422</name>
</gene>
<sequence length="397" mass="44438">MRSIMENLIKNNPTIAIVAGEVSGDILGGGLIKALKVKYPQARFVGIAGKNMLAESCESLVDIEEIAVMGLVEILKHLPRLLKIRSDIVQKLSALKPDIFIGIDSPEFNLYVEDRLKAQGIKTIHYVSPSVWAWRQNRIYKIAKATNLVLAFLPFEKAFYDRFNVPCRFIGHTMADAIPLNPNRTEACKMLNIDENQRYVAILAGSRGSEVEFLAEPFLQTAQLLKRKYPDLKFLVPLVNEKRRRQFEQVKAKVAPELDLILLDGHGRQAMIAAQATLLASGTAALECMLCKSPMVVGYRMKAATYWLAKRLVKTAYISLPNLLADEMLVPEMIQDECTPEKLVEKLSVYLDETESAVQNRQVLIQRFTELHQLIQCDADSQAAQAVADLLEGKVNG</sequence>
<reference key="1">
    <citation type="journal article" date="2004" name="Nat. Biotechnol.">
        <title>The genome sequence of the capnophilic rumen bacterium Mannheimia succiniciproducens.</title>
        <authorList>
            <person name="Hong S.H."/>
            <person name="Kim J.S."/>
            <person name="Lee S.Y."/>
            <person name="In Y.H."/>
            <person name="Choi S.S."/>
            <person name="Rih J.-K."/>
            <person name="Kim C.H."/>
            <person name="Jeong H."/>
            <person name="Hur C.G."/>
            <person name="Kim J.J."/>
        </authorList>
    </citation>
    <scope>NUCLEOTIDE SEQUENCE [LARGE SCALE GENOMIC DNA]</scope>
    <source>
        <strain>KCTC 0769BP / MBEL55E</strain>
    </source>
</reference>
<accession>Q65VI1</accession>
<organism>
    <name type="scientific">Mannheimia succiniciproducens (strain KCTC 0769BP / MBEL55E)</name>
    <dbReference type="NCBI Taxonomy" id="221988"/>
    <lineage>
        <taxon>Bacteria</taxon>
        <taxon>Pseudomonadati</taxon>
        <taxon>Pseudomonadota</taxon>
        <taxon>Gammaproteobacteria</taxon>
        <taxon>Pasteurellales</taxon>
        <taxon>Pasteurellaceae</taxon>
        <taxon>Basfia</taxon>
    </lineage>
</organism>
<comment type="function">
    <text evidence="1">Condensation of UDP-2,3-diacylglucosamine and 2,3-diacylglucosamine-1-phosphate to form lipid A disaccharide, a precursor of lipid A, a phosphorylated glycolipid that anchors the lipopolysaccharide to the outer membrane of the cell.</text>
</comment>
<comment type="catalytic activity">
    <reaction evidence="1">
        <text>a lipid X + a UDP-2-N,3-O-bis[(3R)-3-hydroxyacyl]-alpha-D-glucosamine = a lipid A disaccharide + UDP + H(+)</text>
        <dbReference type="Rhea" id="RHEA:67828"/>
        <dbReference type="ChEBI" id="CHEBI:15378"/>
        <dbReference type="ChEBI" id="CHEBI:58223"/>
        <dbReference type="ChEBI" id="CHEBI:137748"/>
        <dbReference type="ChEBI" id="CHEBI:176338"/>
        <dbReference type="ChEBI" id="CHEBI:176343"/>
        <dbReference type="EC" id="2.4.1.182"/>
    </reaction>
</comment>
<comment type="pathway">
    <text evidence="1">Bacterial outer membrane biogenesis; LPS lipid A biosynthesis.</text>
</comment>
<comment type="similarity">
    <text evidence="1">Belongs to the LpxB family.</text>
</comment>
<evidence type="ECO:0000255" key="1">
    <source>
        <dbReference type="HAMAP-Rule" id="MF_00392"/>
    </source>
</evidence>